<comment type="function">
    <text evidence="1">Does not exhibit any ribonuclease activity.</text>
</comment>
<comment type="subcellular location">
    <subcellularLocation>
        <location evidence="3">Secreted</location>
    </subcellularLocation>
</comment>
<comment type="similarity">
    <text evidence="3">Belongs to the pancreatic ribonuclease family.</text>
</comment>
<name>RNAS9_CEBCA</name>
<feature type="signal peptide" evidence="2">
    <location>
        <begin position="1"/>
        <end position="24"/>
    </location>
</feature>
<feature type="chain" id="PRO_0000030947" description="Inactive ribonuclease-like protein 9">
    <location>
        <begin position="25"/>
        <end position="205"/>
    </location>
</feature>
<feature type="glycosylation site" description="N-linked (GlcNAc...) asparagine" evidence="2">
    <location>
        <position position="130"/>
    </location>
</feature>
<feature type="glycosylation site" description="N-linked (GlcNAc...) asparagine" evidence="2">
    <location>
        <position position="142"/>
    </location>
</feature>
<feature type="disulfide bond" evidence="1">
    <location>
        <begin position="97"/>
        <end position="152"/>
    </location>
</feature>
<feature type="disulfide bond" evidence="1">
    <location>
        <begin position="115"/>
        <end position="167"/>
    </location>
</feature>
<feature type="disulfide bond" evidence="1">
    <location>
        <begin position="122"/>
        <end position="129"/>
    </location>
</feature>
<dbReference type="EMBL" id="AY330199">
    <property type="protein sequence ID" value="AAQ01509.1"/>
    <property type="molecule type" value="Genomic_DNA"/>
</dbReference>
<dbReference type="SMR" id="Q7YRG7"/>
<dbReference type="GlyCosmos" id="Q7YRG7">
    <property type="glycosylation" value="2 sites, No reported glycans"/>
</dbReference>
<dbReference type="GO" id="GO:0005576">
    <property type="term" value="C:extracellular region"/>
    <property type="evidence" value="ECO:0007669"/>
    <property type="project" value="UniProtKB-SubCell"/>
</dbReference>
<dbReference type="GO" id="GO:0003676">
    <property type="term" value="F:nucleic acid binding"/>
    <property type="evidence" value="ECO:0007669"/>
    <property type="project" value="InterPro"/>
</dbReference>
<dbReference type="GO" id="GO:0050830">
    <property type="term" value="P:defense response to Gram-positive bacterium"/>
    <property type="evidence" value="ECO:0007669"/>
    <property type="project" value="TreeGrafter"/>
</dbReference>
<dbReference type="CDD" id="cd00163">
    <property type="entry name" value="RNase_A"/>
    <property type="match status" value="1"/>
</dbReference>
<dbReference type="FunFam" id="3.10.130.10:FF:000003">
    <property type="entry name" value="Inactive ribonuclease-like protein 9"/>
    <property type="match status" value="1"/>
</dbReference>
<dbReference type="Gene3D" id="3.10.130.10">
    <property type="entry name" value="Ribonuclease A-like domain"/>
    <property type="match status" value="1"/>
</dbReference>
<dbReference type="InterPro" id="IPR001427">
    <property type="entry name" value="RNaseA"/>
</dbReference>
<dbReference type="InterPro" id="IPR036816">
    <property type="entry name" value="RNaseA-like_dom_sf"/>
</dbReference>
<dbReference type="InterPro" id="IPR023412">
    <property type="entry name" value="RNaseA_domain"/>
</dbReference>
<dbReference type="PANTHER" id="PTHR11437:SF14">
    <property type="entry name" value="INACTIVE RIBONUCLEASE-LIKE PROTEIN 9"/>
    <property type="match status" value="1"/>
</dbReference>
<dbReference type="PANTHER" id="PTHR11437">
    <property type="entry name" value="RIBONUCLEASE"/>
    <property type="match status" value="1"/>
</dbReference>
<dbReference type="Pfam" id="PF00074">
    <property type="entry name" value="RnaseA"/>
    <property type="match status" value="1"/>
</dbReference>
<dbReference type="SMART" id="SM00092">
    <property type="entry name" value="RNAse_Pc"/>
    <property type="match status" value="1"/>
</dbReference>
<dbReference type="SUPFAM" id="SSF54076">
    <property type="entry name" value="RNase A-like"/>
    <property type="match status" value="1"/>
</dbReference>
<protein>
    <recommendedName>
        <fullName>Inactive ribonuclease-like protein 9</fullName>
    </recommendedName>
</protein>
<evidence type="ECO:0000250" key="1"/>
<evidence type="ECO:0000255" key="2"/>
<evidence type="ECO:0000305" key="3"/>
<proteinExistence type="inferred from homology"/>
<accession>Q7YRG7</accession>
<sequence length="205" mass="24310">MMLITTHSLLLLLLLLQLLQPLQFQEAYYEDFYFPAYRDKEDFEDFMVEFQSTGPTRPPTKEKVKRRILVNPGMPLGDSGYCNYQIMRKNVYYKYSCVTEHYFLLMQYDELQKTCYNRFVPCKNGIRKCNMSKKLVEGVYCNLTKASNIPLCQYNSFYRRGYVLITCTWQNEMQKLIPYTINDLVEPPEHTKSFLNEDGVFVVPP</sequence>
<organism>
    <name type="scientific">Cebus capucinus</name>
    <name type="common">White-faced sapajou</name>
    <dbReference type="NCBI Taxonomy" id="9516"/>
    <lineage>
        <taxon>Eukaryota</taxon>
        <taxon>Metazoa</taxon>
        <taxon>Chordata</taxon>
        <taxon>Craniata</taxon>
        <taxon>Vertebrata</taxon>
        <taxon>Euteleostomi</taxon>
        <taxon>Mammalia</taxon>
        <taxon>Eutheria</taxon>
        <taxon>Euarchontoglires</taxon>
        <taxon>Primates</taxon>
        <taxon>Haplorrhini</taxon>
        <taxon>Platyrrhini</taxon>
        <taxon>Cebidae</taxon>
        <taxon>Cebinae</taxon>
        <taxon>Cebus</taxon>
    </lineage>
</organism>
<gene>
    <name type="primary">RNASE9</name>
</gene>
<reference key="1">
    <citation type="submission" date="2003-06" db="EMBL/GenBank/DDBJ databases">
        <title>LOC122650 on chromosome 14q11.2 is related to the RNase A superfamily and contains a unique amino-terminal pre-protein-like domain.</title>
        <authorList>
            <person name="Devor E.J."/>
            <person name="Moffat-Wilson K.A."/>
        </authorList>
    </citation>
    <scope>NUCLEOTIDE SEQUENCE [GENOMIC DNA]</scope>
</reference>
<keyword id="KW-1015">Disulfide bond</keyword>
<keyword id="KW-0325">Glycoprotein</keyword>
<keyword id="KW-0964">Secreted</keyword>
<keyword id="KW-0732">Signal</keyword>